<evidence type="ECO:0000255" key="1">
    <source>
        <dbReference type="HAMAP-Rule" id="MF_01324"/>
    </source>
</evidence>
<evidence type="ECO:0000256" key="2">
    <source>
        <dbReference type="SAM" id="MobiDB-lite"/>
    </source>
</evidence>
<comment type="function">
    <text evidence="1">DNA-dependent RNA polymerase catalyzes the transcription of DNA into RNA using the four ribonucleoside triphosphates as substrates.</text>
</comment>
<comment type="catalytic activity">
    <reaction evidence="1">
        <text>RNA(n) + a ribonucleoside 5'-triphosphate = RNA(n+1) + diphosphate</text>
        <dbReference type="Rhea" id="RHEA:21248"/>
        <dbReference type="Rhea" id="RHEA-COMP:14527"/>
        <dbReference type="Rhea" id="RHEA-COMP:17342"/>
        <dbReference type="ChEBI" id="CHEBI:33019"/>
        <dbReference type="ChEBI" id="CHEBI:61557"/>
        <dbReference type="ChEBI" id="CHEBI:140395"/>
        <dbReference type="EC" id="2.7.7.6"/>
    </reaction>
</comment>
<comment type="cofactor">
    <cofactor evidence="1">
        <name>Zn(2+)</name>
        <dbReference type="ChEBI" id="CHEBI:29105"/>
    </cofactor>
    <text evidence="1">Binds 1 Zn(2+) ion per subunit.</text>
</comment>
<comment type="subunit">
    <text evidence="1">In plastids the minimal PEP RNA polymerase catalytic core is composed of four subunits: alpha, beta, beta', and beta''. When a (nuclear-encoded) sigma factor is associated with the core the holoenzyme is formed, which can initiate transcription.</text>
</comment>
<comment type="subcellular location">
    <subcellularLocation>
        <location evidence="1">Plastid</location>
        <location evidence="1">Chloroplast</location>
    </subcellularLocation>
</comment>
<comment type="similarity">
    <text evidence="1">Belongs to the RNA polymerase beta' chain family. RpoC2 subfamily.</text>
</comment>
<proteinExistence type="inferred from homology"/>
<keyword id="KW-0150">Chloroplast</keyword>
<keyword id="KW-0240">DNA-directed RNA polymerase</keyword>
<keyword id="KW-0479">Metal-binding</keyword>
<keyword id="KW-0548">Nucleotidyltransferase</keyword>
<keyword id="KW-0934">Plastid</keyword>
<keyword id="KW-0804">Transcription</keyword>
<keyword id="KW-0808">Transferase</keyword>
<keyword id="KW-0862">Zinc</keyword>
<protein>
    <recommendedName>
        <fullName evidence="1">DNA-directed RNA polymerase subunit beta''</fullName>
        <ecNumber evidence="1">2.7.7.6</ecNumber>
    </recommendedName>
    <alternativeName>
        <fullName evidence="1">PEP</fullName>
    </alternativeName>
    <alternativeName>
        <fullName evidence="1">Plastid-encoded RNA polymerase subunit beta''</fullName>
        <shortName evidence="1">RNA polymerase subunit beta''</shortName>
    </alternativeName>
</protein>
<reference key="1">
    <citation type="journal article" date="1999" name="Proc. Natl. Acad. Sci. U.S.A.">
        <title>The complete chloroplast DNA sequence of the green alga Nephroselmis olivacea: insights into the architecture of ancestral chloroplast genomes.</title>
        <authorList>
            <person name="Turmel M."/>
            <person name="Otis C."/>
            <person name="Lemieux C."/>
        </authorList>
    </citation>
    <scope>NUCLEOTIDE SEQUENCE [LARGE SCALE GENOMIC DNA]</scope>
    <source>
        <strain>NIES-484 / S-N-5-8</strain>
    </source>
</reference>
<name>RPOC2_NEPOL</name>
<accession>Q9TL04</accession>
<organism>
    <name type="scientific">Nephroselmis olivacea</name>
    <name type="common">Green alga</name>
    <dbReference type="NCBI Taxonomy" id="31312"/>
    <lineage>
        <taxon>Eukaryota</taxon>
        <taxon>Viridiplantae</taxon>
        <taxon>Chlorophyta</taxon>
        <taxon>Nephroselmidophyceae</taxon>
        <taxon>Nephroselmidales</taxon>
        <taxon>Nephroselmidaceae</taxon>
        <taxon>Nephroselmis</taxon>
    </lineage>
</organism>
<sequence length="1463" mass="165153">MNTQEKHQFEPVLPQAHDDPTLSKPPIFFNRTADKGMIKRLIAWFLVHYGLADTVSMIEDLKQVGFQYATRAGISLGIEDLRIPPTKPRLLQEAHREINRMEFRYQQGYVSLVERFQKVIDTWNGTSELLKDDVVENFLATDPLNPVYMMAFSGARGNLSQVRQLVGMRGLMSNPQGEIIDLPIRSNFREGLTVTEYIISCYGARKGLVDTALRTANSGYLTRRLVDVAQDIVIRMTSCSPSAYPLISFTKSGKEVVYPLEERLLGRVLAIGAFNQEGELISGPDTAISQEIAVQLMDCDPKEILVRSVLLCKSKRGLCRLCYGWNLGTGTIVSIGEAVGIIAAQSIGEPGTQLTMRTFHTGGVFAGGVTNEIRAPHAGLVHYPRPIHPKWVRTRHGQFGILISEKIEIIFEHESKKTIQVFDAGTVLTIHEGEKVHTNQLIGEIPAHGTLVTGWRSLKSGVDGEVRFDELELLKQRPRSDRTSPVRLDPRVCNKAHLWILQGHVNTFEMPIQLVANIGDKVEKDSIVSTTKQVVSEEGRIIYRYDEKRGKEQTIITHAFGSVQFDGVDAWLPTKSQGIKQSIRTTGGKLSISSQGMTLSATKIKQEGIGSFDWPALAEPSIEEDEELEEAYKKTKDPIIQPTPYPLQYCVLPEQKYVIQAQEGWIISVLGGQSVGASQSLATYVDSQWEVEQGQLSIRSIEYRVHDQSWIQVITPSLVEIESGRGSYHLMAKAGWIIPISTKIRCKDYRLISGSILLGKWSLPISRFAVEQAASYPAILIRPIHTYPVYPTTIWDETINWQRGIASIGSNDWHPRCIAPTYQAPSYVESFKGRQTFTGEEKQEGNKPVEITSKNRRKSAANSSHETRMTQNRTWPIVLADTRIQKGASPIQIEWTWPHAKNPWISPNHGAIAGHIRFVNMTILDSSSISTKQELDHREAQVIPTTQTVSGVHRLTPLLEKTVFSQDDGEIQRMLPFSRALVKPVRTNRSKTRRNASGKTQVKAQARSQAKARSVRLKLKETVKTRSQEKFTNEMKKQLAKSSEGNKGFQIRQALFPKKLIRLMVVLRPVDIMTFATYGARVCIPLGAMIYQGEELFEGASTPISGQLIEIRRDRVTLRIGQPYRVGWQSRLMVTRDQIVKAEKVLAHLLYFKTKTGDIVQGLPKIEEILEARRKKGNEIIRSNLQDFVQQFYQDNLDEGFSRKYASTRTMRAMQVLILRRVQLVYRSQGVQISDKHLEIISLRMTSRVLVEKAYGTGILPGEIIEKRRADMLNQGRTRIRYCPIVLGITKASLTTKGFISSASFQETTRVLTQAVLQGKSDWLLGLKENVILGRLIPAGVGIYGHWVGPHEFNIKQMLKLWVLPPIITGQSTMRAMFHSTTRYWQDLEAVMESPNKLYPVTPYKCYPDTQHLAGLSIWMPEFEFRRFETFTEEEMVAAESLFTAHPNCHARRINNKQLNSLI</sequence>
<gene>
    <name evidence="1" type="primary">rpoC2</name>
</gene>
<geneLocation type="chloroplast"/>
<dbReference type="EC" id="2.7.7.6" evidence="1"/>
<dbReference type="EMBL" id="AF137379">
    <property type="protein sequence ID" value="AAD54812.1"/>
    <property type="molecule type" value="Genomic_DNA"/>
</dbReference>
<dbReference type="RefSeq" id="NP_050841.1">
    <property type="nucleotide sequence ID" value="NC_000927.1"/>
</dbReference>
<dbReference type="SMR" id="Q9TL04"/>
<dbReference type="GeneID" id="802013"/>
<dbReference type="GO" id="GO:0009507">
    <property type="term" value="C:chloroplast"/>
    <property type="evidence" value="ECO:0007669"/>
    <property type="project" value="UniProtKB-SubCell"/>
</dbReference>
<dbReference type="GO" id="GO:0000428">
    <property type="term" value="C:DNA-directed RNA polymerase complex"/>
    <property type="evidence" value="ECO:0007669"/>
    <property type="project" value="UniProtKB-KW"/>
</dbReference>
<dbReference type="GO" id="GO:0005739">
    <property type="term" value="C:mitochondrion"/>
    <property type="evidence" value="ECO:0007669"/>
    <property type="project" value="GOC"/>
</dbReference>
<dbReference type="GO" id="GO:0003677">
    <property type="term" value="F:DNA binding"/>
    <property type="evidence" value="ECO:0007669"/>
    <property type="project" value="UniProtKB-UniRule"/>
</dbReference>
<dbReference type="GO" id="GO:0003899">
    <property type="term" value="F:DNA-directed RNA polymerase activity"/>
    <property type="evidence" value="ECO:0007669"/>
    <property type="project" value="UniProtKB-UniRule"/>
</dbReference>
<dbReference type="GO" id="GO:0008270">
    <property type="term" value="F:zinc ion binding"/>
    <property type="evidence" value="ECO:0007669"/>
    <property type="project" value="UniProtKB-UniRule"/>
</dbReference>
<dbReference type="GO" id="GO:0006351">
    <property type="term" value="P:DNA-templated transcription"/>
    <property type="evidence" value="ECO:0007669"/>
    <property type="project" value="UniProtKB-UniRule"/>
</dbReference>
<dbReference type="CDD" id="cd02655">
    <property type="entry name" value="RNAP_beta'_C"/>
    <property type="match status" value="1"/>
</dbReference>
<dbReference type="Gene3D" id="1.10.132.30">
    <property type="match status" value="1"/>
</dbReference>
<dbReference type="Gene3D" id="1.10.150.390">
    <property type="match status" value="1"/>
</dbReference>
<dbReference type="Gene3D" id="1.10.1790.20">
    <property type="match status" value="1"/>
</dbReference>
<dbReference type="Gene3D" id="1.10.274.100">
    <property type="entry name" value="RNA polymerase Rpb1, domain 3"/>
    <property type="match status" value="1"/>
</dbReference>
<dbReference type="HAMAP" id="MF_01324">
    <property type="entry name" value="RNApol_bact_RpoC2"/>
    <property type="match status" value="1"/>
</dbReference>
<dbReference type="InterPro" id="IPR012756">
    <property type="entry name" value="DNA-dir_RpoC2_beta_pp"/>
</dbReference>
<dbReference type="InterPro" id="IPR045867">
    <property type="entry name" value="DNA-dir_RpoC_beta_prime"/>
</dbReference>
<dbReference type="InterPro" id="IPR042102">
    <property type="entry name" value="RNA_pol_Rpb1_3_sf"/>
</dbReference>
<dbReference type="InterPro" id="IPR007083">
    <property type="entry name" value="RNA_pol_Rpb1_4"/>
</dbReference>
<dbReference type="InterPro" id="IPR007081">
    <property type="entry name" value="RNA_pol_Rpb1_5"/>
</dbReference>
<dbReference type="InterPro" id="IPR038120">
    <property type="entry name" value="Rpb1_funnel_sf"/>
</dbReference>
<dbReference type="NCBIfam" id="TIGR02388">
    <property type="entry name" value="rpoC2_cyan"/>
    <property type="match status" value="1"/>
</dbReference>
<dbReference type="PANTHER" id="PTHR19376">
    <property type="entry name" value="DNA-DIRECTED RNA POLYMERASE"/>
    <property type="match status" value="1"/>
</dbReference>
<dbReference type="PANTHER" id="PTHR19376:SF68">
    <property type="entry name" value="DNA-DIRECTED RNA POLYMERASE SUBUNIT BETA"/>
    <property type="match status" value="1"/>
</dbReference>
<dbReference type="Pfam" id="PF05000">
    <property type="entry name" value="RNA_pol_Rpb1_4"/>
    <property type="match status" value="1"/>
</dbReference>
<dbReference type="Pfam" id="PF04998">
    <property type="entry name" value="RNA_pol_Rpb1_5"/>
    <property type="match status" value="1"/>
</dbReference>
<dbReference type="SUPFAM" id="SSF64484">
    <property type="entry name" value="beta and beta-prime subunits of DNA dependent RNA-polymerase"/>
    <property type="match status" value="1"/>
</dbReference>
<feature type="chain" id="PRO_0000067932" description="DNA-directed RNA polymerase subunit beta''">
    <location>
        <begin position="1"/>
        <end position="1463"/>
    </location>
</feature>
<feature type="region of interest" description="Disordered" evidence="2">
    <location>
        <begin position="836"/>
        <end position="869"/>
    </location>
</feature>
<feature type="region of interest" description="Disordered" evidence="2">
    <location>
        <begin position="987"/>
        <end position="1007"/>
    </location>
</feature>
<feature type="compositionally biased region" description="Polar residues" evidence="2">
    <location>
        <begin position="860"/>
        <end position="869"/>
    </location>
</feature>
<feature type="compositionally biased region" description="Basic residues" evidence="2">
    <location>
        <begin position="987"/>
        <end position="996"/>
    </location>
</feature>
<feature type="compositionally biased region" description="Polar residues" evidence="2">
    <location>
        <begin position="997"/>
        <end position="1007"/>
    </location>
</feature>
<feature type="binding site" evidence="1">
    <location>
        <position position="239"/>
    </location>
    <ligand>
        <name>Zn(2+)</name>
        <dbReference type="ChEBI" id="CHEBI:29105"/>
    </ligand>
</feature>
<feature type="binding site" evidence="1">
    <location>
        <position position="312"/>
    </location>
    <ligand>
        <name>Zn(2+)</name>
        <dbReference type="ChEBI" id="CHEBI:29105"/>
    </ligand>
</feature>
<feature type="binding site" evidence="1">
    <location>
        <position position="319"/>
    </location>
    <ligand>
        <name>Zn(2+)</name>
        <dbReference type="ChEBI" id="CHEBI:29105"/>
    </ligand>
</feature>
<feature type="binding site" evidence="1">
    <location>
        <position position="322"/>
    </location>
    <ligand>
        <name>Zn(2+)</name>
        <dbReference type="ChEBI" id="CHEBI:29105"/>
    </ligand>
</feature>